<name>EFP_BRUA2</name>
<evidence type="ECO:0000255" key="1">
    <source>
        <dbReference type="HAMAP-Rule" id="MF_00141"/>
    </source>
</evidence>
<sequence length="186" mass="20700">MKINGNEIRPGNVIEHEGGLWVAVKTNAVKPGKGGAYNQVELKNLINGTKLNERFRAAESVERVRLEQKDFSFLYEQGEALIFMDTETYEQLELQKDFVGDRAAFLQDGMMVTVELYEEKPIGIRLPDQVTLAITEADPVVKGQTAASSYKPAVLENGIRIPVPPFIASGERVIVDTNELTYISRA</sequence>
<reference key="1">
    <citation type="submission" date="2002-12" db="EMBL/GenBank/DDBJ databases">
        <title>Cloning and characterization of the Agrobacterium tumefaciens chvH homolog gene in Brucella abortus.</title>
        <authorList>
            <person name="Iannino F."/>
            <person name="Inon de Iannino N."/>
        </authorList>
    </citation>
    <scope>NUCLEOTIDE SEQUENCE [GENOMIC DNA]</scope>
</reference>
<reference key="2">
    <citation type="journal article" date="2005" name="Infect. Immun.">
        <title>Whole-genome analyses of speciation events in pathogenic Brucellae.</title>
        <authorList>
            <person name="Chain P.S."/>
            <person name="Comerci D.J."/>
            <person name="Tolmasky M.E."/>
            <person name="Larimer F.W."/>
            <person name="Malfatti S.A."/>
            <person name="Vergez L.M."/>
            <person name="Aguero F."/>
            <person name="Land M.L."/>
            <person name="Ugalde R.A."/>
            <person name="Garcia E."/>
        </authorList>
    </citation>
    <scope>NUCLEOTIDE SEQUENCE [LARGE SCALE GENOMIC DNA]</scope>
    <source>
        <strain>2308</strain>
    </source>
</reference>
<accession>Q2YRC4</accession>
<accession>Q57BH0</accession>
<accession>Q6XUV8</accession>
<comment type="function">
    <text evidence="1">Involved in peptide bond synthesis. Stimulates efficient translation and peptide-bond synthesis on native or reconstituted 70S ribosomes in vitro. Probably functions indirectly by altering the affinity of the ribosome for aminoacyl-tRNA, thus increasing their reactivity as acceptors for peptidyl transferase.</text>
</comment>
<comment type="pathway">
    <text evidence="1">Protein biosynthesis; polypeptide chain elongation.</text>
</comment>
<comment type="subcellular location">
    <subcellularLocation>
        <location evidence="1">Cytoplasm</location>
    </subcellularLocation>
</comment>
<comment type="similarity">
    <text evidence="1">Belongs to the elongation factor P family.</text>
</comment>
<organism>
    <name type="scientific">Brucella abortus (strain 2308)</name>
    <dbReference type="NCBI Taxonomy" id="359391"/>
    <lineage>
        <taxon>Bacteria</taxon>
        <taxon>Pseudomonadati</taxon>
        <taxon>Pseudomonadota</taxon>
        <taxon>Alphaproteobacteria</taxon>
        <taxon>Hyphomicrobiales</taxon>
        <taxon>Brucellaceae</taxon>
        <taxon>Brucella/Ochrobactrum group</taxon>
        <taxon>Brucella</taxon>
    </lineage>
</organism>
<dbReference type="EMBL" id="AY208889">
    <property type="protein sequence ID" value="AAO48984.1"/>
    <property type="molecule type" value="Genomic_DNA"/>
</dbReference>
<dbReference type="EMBL" id="AM040264">
    <property type="protein sequence ID" value="CAJ11678.1"/>
    <property type="molecule type" value="Genomic_DNA"/>
</dbReference>
<dbReference type="RefSeq" id="WP_002964799.1">
    <property type="nucleotide sequence ID" value="NZ_KN046823.1"/>
</dbReference>
<dbReference type="SMR" id="Q2YRC4"/>
<dbReference type="STRING" id="359391.BAB1_1722"/>
<dbReference type="GeneID" id="93017928"/>
<dbReference type="KEGG" id="bmf:BAB1_1722"/>
<dbReference type="PATRIC" id="fig|359391.11.peg.236"/>
<dbReference type="HOGENOM" id="CLU_074944_1_1_5"/>
<dbReference type="PhylomeDB" id="Q2YRC4"/>
<dbReference type="UniPathway" id="UPA00345"/>
<dbReference type="Proteomes" id="UP000002719">
    <property type="component" value="Chromosome I"/>
</dbReference>
<dbReference type="GO" id="GO:0005737">
    <property type="term" value="C:cytoplasm"/>
    <property type="evidence" value="ECO:0007669"/>
    <property type="project" value="UniProtKB-SubCell"/>
</dbReference>
<dbReference type="GO" id="GO:0003746">
    <property type="term" value="F:translation elongation factor activity"/>
    <property type="evidence" value="ECO:0007669"/>
    <property type="project" value="UniProtKB-UniRule"/>
</dbReference>
<dbReference type="GO" id="GO:0043043">
    <property type="term" value="P:peptide biosynthetic process"/>
    <property type="evidence" value="ECO:0007669"/>
    <property type="project" value="InterPro"/>
</dbReference>
<dbReference type="CDD" id="cd04470">
    <property type="entry name" value="S1_EF-P_repeat_1"/>
    <property type="match status" value="1"/>
</dbReference>
<dbReference type="CDD" id="cd05794">
    <property type="entry name" value="S1_EF-P_repeat_2"/>
    <property type="match status" value="1"/>
</dbReference>
<dbReference type="FunFam" id="2.30.30.30:FF:000003">
    <property type="entry name" value="Elongation factor P"/>
    <property type="match status" value="1"/>
</dbReference>
<dbReference type="FunFam" id="2.40.50.140:FF:000004">
    <property type="entry name" value="Elongation factor P"/>
    <property type="match status" value="1"/>
</dbReference>
<dbReference type="FunFam" id="2.40.50.140:FF:000009">
    <property type="entry name" value="Elongation factor P"/>
    <property type="match status" value="1"/>
</dbReference>
<dbReference type="Gene3D" id="2.30.30.30">
    <property type="match status" value="1"/>
</dbReference>
<dbReference type="Gene3D" id="2.40.50.140">
    <property type="entry name" value="Nucleic acid-binding proteins"/>
    <property type="match status" value="2"/>
</dbReference>
<dbReference type="HAMAP" id="MF_00141">
    <property type="entry name" value="EF_P"/>
    <property type="match status" value="1"/>
</dbReference>
<dbReference type="InterPro" id="IPR015365">
    <property type="entry name" value="Elong-fact-P_C"/>
</dbReference>
<dbReference type="InterPro" id="IPR012340">
    <property type="entry name" value="NA-bd_OB-fold"/>
</dbReference>
<dbReference type="InterPro" id="IPR014722">
    <property type="entry name" value="Rib_uL2_dom2"/>
</dbReference>
<dbReference type="InterPro" id="IPR020599">
    <property type="entry name" value="Transl_elong_fac_P/YeiP"/>
</dbReference>
<dbReference type="InterPro" id="IPR013185">
    <property type="entry name" value="Transl_elong_KOW-like"/>
</dbReference>
<dbReference type="InterPro" id="IPR001059">
    <property type="entry name" value="Transl_elong_P/YeiP_cen"/>
</dbReference>
<dbReference type="InterPro" id="IPR013852">
    <property type="entry name" value="Transl_elong_P/YeiP_CS"/>
</dbReference>
<dbReference type="InterPro" id="IPR011768">
    <property type="entry name" value="Transl_elongation_fac_P"/>
</dbReference>
<dbReference type="InterPro" id="IPR008991">
    <property type="entry name" value="Translation_prot_SH3-like_sf"/>
</dbReference>
<dbReference type="NCBIfam" id="TIGR00038">
    <property type="entry name" value="efp"/>
    <property type="match status" value="1"/>
</dbReference>
<dbReference type="NCBIfam" id="NF001810">
    <property type="entry name" value="PRK00529.1"/>
    <property type="match status" value="1"/>
</dbReference>
<dbReference type="PANTHER" id="PTHR30053">
    <property type="entry name" value="ELONGATION FACTOR P"/>
    <property type="match status" value="1"/>
</dbReference>
<dbReference type="PANTHER" id="PTHR30053:SF14">
    <property type="entry name" value="TRANSLATION ELONGATION FACTOR KOW-LIKE DOMAIN-CONTAINING PROTEIN"/>
    <property type="match status" value="1"/>
</dbReference>
<dbReference type="Pfam" id="PF01132">
    <property type="entry name" value="EFP"/>
    <property type="match status" value="1"/>
</dbReference>
<dbReference type="Pfam" id="PF08207">
    <property type="entry name" value="EFP_N"/>
    <property type="match status" value="1"/>
</dbReference>
<dbReference type="Pfam" id="PF09285">
    <property type="entry name" value="Elong-fact-P_C"/>
    <property type="match status" value="1"/>
</dbReference>
<dbReference type="PIRSF" id="PIRSF005901">
    <property type="entry name" value="EF-P"/>
    <property type="match status" value="1"/>
</dbReference>
<dbReference type="SMART" id="SM01185">
    <property type="entry name" value="EFP"/>
    <property type="match status" value="1"/>
</dbReference>
<dbReference type="SMART" id="SM00841">
    <property type="entry name" value="Elong-fact-P_C"/>
    <property type="match status" value="1"/>
</dbReference>
<dbReference type="SUPFAM" id="SSF50249">
    <property type="entry name" value="Nucleic acid-binding proteins"/>
    <property type="match status" value="2"/>
</dbReference>
<dbReference type="SUPFAM" id="SSF50104">
    <property type="entry name" value="Translation proteins SH3-like domain"/>
    <property type="match status" value="1"/>
</dbReference>
<dbReference type="PROSITE" id="PS01275">
    <property type="entry name" value="EFP"/>
    <property type="match status" value="1"/>
</dbReference>
<protein>
    <recommendedName>
        <fullName evidence="1">Elongation factor P</fullName>
        <shortName evidence="1">EF-P</shortName>
    </recommendedName>
</protein>
<gene>
    <name evidence="1" type="primary">efp</name>
    <name type="ordered locus">BAB1_1722</name>
</gene>
<keyword id="KW-0963">Cytoplasm</keyword>
<keyword id="KW-0251">Elongation factor</keyword>
<keyword id="KW-0648">Protein biosynthesis</keyword>
<keyword id="KW-1185">Reference proteome</keyword>
<proteinExistence type="inferred from homology"/>
<feature type="chain" id="PRO_0000094212" description="Elongation factor P">
    <location>
        <begin position="1"/>
        <end position="186"/>
    </location>
</feature>